<keyword id="KW-0030">Aminoacyl-tRNA synthetase</keyword>
<keyword id="KW-0067">ATP-binding</keyword>
<keyword id="KW-0963">Cytoplasm</keyword>
<keyword id="KW-0436">Ligase</keyword>
<keyword id="KW-0547">Nucleotide-binding</keyword>
<keyword id="KW-0648">Protein biosynthesis</keyword>
<keyword id="KW-1185">Reference proteome</keyword>
<proteinExistence type="inferred from homology"/>
<protein>
    <recommendedName>
        <fullName evidence="1">Serine--tRNA ligase</fullName>
        <ecNumber evidence="1">6.1.1.11</ecNumber>
    </recommendedName>
    <alternativeName>
        <fullName evidence="1">Seryl-tRNA synthetase</fullName>
        <shortName evidence="1">SerRS</shortName>
    </alternativeName>
    <alternativeName>
        <fullName evidence="1">Seryl-tRNA(Ser/Sec) synthetase</fullName>
    </alternativeName>
</protein>
<dbReference type="EC" id="6.1.1.11" evidence="1"/>
<dbReference type="EMBL" id="CP000009">
    <property type="protein sequence ID" value="AAW61498.1"/>
    <property type="molecule type" value="Genomic_DNA"/>
</dbReference>
<dbReference type="RefSeq" id="WP_011253279.1">
    <property type="nucleotide sequence ID" value="NC_006677.1"/>
</dbReference>
<dbReference type="SMR" id="Q5FQ48"/>
<dbReference type="STRING" id="290633.GOX1759"/>
<dbReference type="KEGG" id="gox:GOX1759"/>
<dbReference type="eggNOG" id="COG0172">
    <property type="taxonomic scope" value="Bacteria"/>
</dbReference>
<dbReference type="HOGENOM" id="CLU_023797_1_1_5"/>
<dbReference type="UniPathway" id="UPA00906">
    <property type="reaction ID" value="UER00895"/>
</dbReference>
<dbReference type="Proteomes" id="UP000006375">
    <property type="component" value="Chromosome"/>
</dbReference>
<dbReference type="GO" id="GO:0005737">
    <property type="term" value="C:cytoplasm"/>
    <property type="evidence" value="ECO:0007669"/>
    <property type="project" value="UniProtKB-SubCell"/>
</dbReference>
<dbReference type="GO" id="GO:0005524">
    <property type="term" value="F:ATP binding"/>
    <property type="evidence" value="ECO:0007669"/>
    <property type="project" value="UniProtKB-UniRule"/>
</dbReference>
<dbReference type="GO" id="GO:0004828">
    <property type="term" value="F:serine-tRNA ligase activity"/>
    <property type="evidence" value="ECO:0007669"/>
    <property type="project" value="UniProtKB-UniRule"/>
</dbReference>
<dbReference type="GO" id="GO:0016260">
    <property type="term" value="P:selenocysteine biosynthetic process"/>
    <property type="evidence" value="ECO:0007669"/>
    <property type="project" value="UniProtKB-UniRule"/>
</dbReference>
<dbReference type="GO" id="GO:0006434">
    <property type="term" value="P:seryl-tRNA aminoacylation"/>
    <property type="evidence" value="ECO:0007669"/>
    <property type="project" value="UniProtKB-UniRule"/>
</dbReference>
<dbReference type="CDD" id="cd00770">
    <property type="entry name" value="SerRS_core"/>
    <property type="match status" value="1"/>
</dbReference>
<dbReference type="Gene3D" id="3.30.930.10">
    <property type="entry name" value="Bira Bifunctional Protein, Domain 2"/>
    <property type="match status" value="1"/>
</dbReference>
<dbReference type="Gene3D" id="1.10.287.40">
    <property type="entry name" value="Serine-tRNA synthetase, tRNA binding domain"/>
    <property type="match status" value="1"/>
</dbReference>
<dbReference type="HAMAP" id="MF_00176">
    <property type="entry name" value="Ser_tRNA_synth_type1"/>
    <property type="match status" value="1"/>
</dbReference>
<dbReference type="InterPro" id="IPR002314">
    <property type="entry name" value="aa-tRNA-synt_IIb"/>
</dbReference>
<dbReference type="InterPro" id="IPR006195">
    <property type="entry name" value="aa-tRNA-synth_II"/>
</dbReference>
<dbReference type="InterPro" id="IPR045864">
    <property type="entry name" value="aa-tRNA-synth_II/BPL/LPL"/>
</dbReference>
<dbReference type="InterPro" id="IPR002317">
    <property type="entry name" value="Ser-tRNA-ligase_type_1"/>
</dbReference>
<dbReference type="InterPro" id="IPR015866">
    <property type="entry name" value="Ser-tRNA-synth_1_N"/>
</dbReference>
<dbReference type="InterPro" id="IPR042103">
    <property type="entry name" value="SerRS_1_N_sf"/>
</dbReference>
<dbReference type="InterPro" id="IPR033729">
    <property type="entry name" value="SerRS_core"/>
</dbReference>
<dbReference type="InterPro" id="IPR010978">
    <property type="entry name" value="tRNA-bd_arm"/>
</dbReference>
<dbReference type="NCBIfam" id="TIGR00414">
    <property type="entry name" value="serS"/>
    <property type="match status" value="1"/>
</dbReference>
<dbReference type="PANTHER" id="PTHR43697:SF1">
    <property type="entry name" value="SERINE--TRNA LIGASE"/>
    <property type="match status" value="1"/>
</dbReference>
<dbReference type="PANTHER" id="PTHR43697">
    <property type="entry name" value="SERYL-TRNA SYNTHETASE"/>
    <property type="match status" value="1"/>
</dbReference>
<dbReference type="Pfam" id="PF02403">
    <property type="entry name" value="Seryl_tRNA_N"/>
    <property type="match status" value="1"/>
</dbReference>
<dbReference type="Pfam" id="PF00587">
    <property type="entry name" value="tRNA-synt_2b"/>
    <property type="match status" value="1"/>
</dbReference>
<dbReference type="PIRSF" id="PIRSF001529">
    <property type="entry name" value="Ser-tRNA-synth_IIa"/>
    <property type="match status" value="1"/>
</dbReference>
<dbReference type="PRINTS" id="PR00981">
    <property type="entry name" value="TRNASYNTHSER"/>
</dbReference>
<dbReference type="SUPFAM" id="SSF55681">
    <property type="entry name" value="Class II aaRS and biotin synthetases"/>
    <property type="match status" value="1"/>
</dbReference>
<dbReference type="SUPFAM" id="SSF46589">
    <property type="entry name" value="tRNA-binding arm"/>
    <property type="match status" value="1"/>
</dbReference>
<dbReference type="PROSITE" id="PS50862">
    <property type="entry name" value="AA_TRNA_LIGASE_II"/>
    <property type="match status" value="1"/>
</dbReference>
<accession>Q5FQ48</accession>
<evidence type="ECO:0000255" key="1">
    <source>
        <dbReference type="HAMAP-Rule" id="MF_00176"/>
    </source>
</evidence>
<comment type="function">
    <text evidence="1">Catalyzes the attachment of serine to tRNA(Ser). Is also able to aminoacylate tRNA(Sec) with serine, to form the misacylated tRNA L-seryl-tRNA(Sec), which will be further converted into selenocysteinyl-tRNA(Sec).</text>
</comment>
<comment type="catalytic activity">
    <reaction evidence="1">
        <text>tRNA(Ser) + L-serine + ATP = L-seryl-tRNA(Ser) + AMP + diphosphate + H(+)</text>
        <dbReference type="Rhea" id="RHEA:12292"/>
        <dbReference type="Rhea" id="RHEA-COMP:9669"/>
        <dbReference type="Rhea" id="RHEA-COMP:9703"/>
        <dbReference type="ChEBI" id="CHEBI:15378"/>
        <dbReference type="ChEBI" id="CHEBI:30616"/>
        <dbReference type="ChEBI" id="CHEBI:33019"/>
        <dbReference type="ChEBI" id="CHEBI:33384"/>
        <dbReference type="ChEBI" id="CHEBI:78442"/>
        <dbReference type="ChEBI" id="CHEBI:78533"/>
        <dbReference type="ChEBI" id="CHEBI:456215"/>
        <dbReference type="EC" id="6.1.1.11"/>
    </reaction>
</comment>
<comment type="catalytic activity">
    <reaction evidence="1">
        <text>tRNA(Sec) + L-serine + ATP = L-seryl-tRNA(Sec) + AMP + diphosphate + H(+)</text>
        <dbReference type="Rhea" id="RHEA:42580"/>
        <dbReference type="Rhea" id="RHEA-COMP:9742"/>
        <dbReference type="Rhea" id="RHEA-COMP:10128"/>
        <dbReference type="ChEBI" id="CHEBI:15378"/>
        <dbReference type="ChEBI" id="CHEBI:30616"/>
        <dbReference type="ChEBI" id="CHEBI:33019"/>
        <dbReference type="ChEBI" id="CHEBI:33384"/>
        <dbReference type="ChEBI" id="CHEBI:78442"/>
        <dbReference type="ChEBI" id="CHEBI:78533"/>
        <dbReference type="ChEBI" id="CHEBI:456215"/>
        <dbReference type="EC" id="6.1.1.11"/>
    </reaction>
</comment>
<comment type="pathway">
    <text evidence="1">Aminoacyl-tRNA biosynthesis; selenocysteinyl-tRNA(Sec) biosynthesis; L-seryl-tRNA(Sec) from L-serine and tRNA(Sec): step 1/1.</text>
</comment>
<comment type="subunit">
    <text evidence="1">Homodimer. The tRNA molecule binds across the dimer.</text>
</comment>
<comment type="subcellular location">
    <subcellularLocation>
        <location evidence="1">Cytoplasm</location>
    </subcellularLocation>
</comment>
<comment type="domain">
    <text evidence="1">Consists of two distinct domains, a catalytic core and a N-terminal extension that is involved in tRNA binding.</text>
</comment>
<comment type="similarity">
    <text evidence="1">Belongs to the class-II aminoacyl-tRNA synthetase family. Type-1 seryl-tRNA synthetase subfamily.</text>
</comment>
<organism>
    <name type="scientific">Gluconobacter oxydans (strain 621H)</name>
    <name type="common">Gluconobacter suboxydans</name>
    <dbReference type="NCBI Taxonomy" id="290633"/>
    <lineage>
        <taxon>Bacteria</taxon>
        <taxon>Pseudomonadati</taxon>
        <taxon>Pseudomonadota</taxon>
        <taxon>Alphaproteobacteria</taxon>
        <taxon>Acetobacterales</taxon>
        <taxon>Acetobacteraceae</taxon>
        <taxon>Gluconobacter</taxon>
    </lineage>
</organism>
<gene>
    <name evidence="1" type="primary">serS</name>
    <name type="ordered locus">GOX1759</name>
</gene>
<reference key="1">
    <citation type="journal article" date="2005" name="Nat. Biotechnol.">
        <title>Complete genome sequence of the acetic acid bacterium Gluconobacter oxydans.</title>
        <authorList>
            <person name="Prust C."/>
            <person name="Hoffmeister M."/>
            <person name="Liesegang H."/>
            <person name="Wiezer A."/>
            <person name="Fricke W.F."/>
            <person name="Ehrenreich A."/>
            <person name="Gottschalk G."/>
            <person name="Deppenmeier U."/>
        </authorList>
    </citation>
    <scope>NUCLEOTIDE SEQUENCE [LARGE SCALE GENOMIC DNA]</scope>
    <source>
        <strain>621H</strain>
    </source>
</reference>
<name>SYS_GLUOX</name>
<feature type="chain" id="PRO_0000122055" description="Serine--tRNA ligase">
    <location>
        <begin position="1"/>
        <end position="420"/>
    </location>
</feature>
<feature type="binding site" evidence="1">
    <location>
        <begin position="229"/>
        <end position="231"/>
    </location>
    <ligand>
        <name>L-serine</name>
        <dbReference type="ChEBI" id="CHEBI:33384"/>
    </ligand>
</feature>
<feature type="binding site" evidence="1">
    <location>
        <begin position="260"/>
        <end position="262"/>
    </location>
    <ligand>
        <name>ATP</name>
        <dbReference type="ChEBI" id="CHEBI:30616"/>
    </ligand>
</feature>
<feature type="binding site" evidence="1">
    <location>
        <position position="283"/>
    </location>
    <ligand>
        <name>L-serine</name>
        <dbReference type="ChEBI" id="CHEBI:33384"/>
    </ligand>
</feature>
<feature type="binding site" evidence="1">
    <location>
        <begin position="347"/>
        <end position="350"/>
    </location>
    <ligand>
        <name>ATP</name>
        <dbReference type="ChEBI" id="CHEBI:30616"/>
    </ligand>
</feature>
<feature type="binding site" evidence="1">
    <location>
        <position position="381"/>
    </location>
    <ligand>
        <name>L-serine</name>
        <dbReference type="ChEBI" id="CHEBI:33384"/>
    </ligand>
</feature>
<sequence length="420" mass="46055">MHDLKALRADPAAFDAALARRGLSPVGQQLVSDDEGRRAALAALQEAQGARKALAKEIGLLKRQKLDTAEIEAKAVALRDQIAGLEERANTIQTRIDDVLKSLPNCLDASVPDGKGEDENVVVHVRGEKREFAFEAKQHFELGEALGLMDFPTAAKLSGTRFVVLRGALARLERALGQFMLDTHTTEFGYSETSVPLLVNDDAMYGTDKLPKFAEDSFRTEDGRWLIPTAEVPLTASVMGEILPADALPIRMTALSQCFRSEAGSAGRDVRGMLRQHQFTKCELVSVVKPEDSDAEHERMTQAAETVLERLGITFRRMLLCAGDTGFGAAKTFDLEAWLPGQKAWREISSCSNTRDFQARRMNARYRAENGPAFVNTLNGSGLAVGRTMIAVMETYQNEDGSIDIPEVLRPYMGGLNRIG</sequence>